<accession>Q1MM66</accession>
<protein>
    <recommendedName>
        <fullName evidence="1">Acetylglutamate kinase</fullName>
        <ecNumber evidence="1">2.7.2.8</ecNumber>
    </recommendedName>
    <alternativeName>
        <fullName evidence="1">N-acetyl-L-glutamate 5-phosphotransferase</fullName>
    </alternativeName>
    <alternativeName>
        <fullName evidence="1">NAG kinase</fullName>
        <shortName evidence="1">NAGK</shortName>
    </alternativeName>
</protein>
<sequence length="295" mass="31150">MNETESEMQARLLAKALPFMQRYENKTIVVKYGGHAMGNPELGKAFASDIALLKQSGVNPIVVHGGGPQIGAMLSKMGIESKFEGGLRVTDQKTVEIVEMVLAGSINKEIVALINQTGEWAIGLCGKDGNMVFAEKARKTVKDPDSNIERVLDLGFVGEVVEVDRTLLDLLARSEMIPVIAPVAPGRDGATYNINADTFAGAIAGALNATRLLFLTDVPGVLDKNGQLIKELSVAEAHALIADGTISGGMIPKVETCIDAIKAGVQGVVILNGKTAHSVLLEIFTEHGVGTLIVP</sequence>
<dbReference type="EC" id="2.7.2.8" evidence="1"/>
<dbReference type="EMBL" id="AM236080">
    <property type="protein sequence ID" value="CAK05936.1"/>
    <property type="molecule type" value="Genomic_DNA"/>
</dbReference>
<dbReference type="RefSeq" id="WP_011650234.1">
    <property type="nucleotide sequence ID" value="NC_008380.1"/>
</dbReference>
<dbReference type="SMR" id="Q1MM66"/>
<dbReference type="EnsemblBacteria" id="CAK05936">
    <property type="protein sequence ID" value="CAK05936"/>
    <property type="gene ID" value="RL0445"/>
</dbReference>
<dbReference type="KEGG" id="rle:RL0445"/>
<dbReference type="eggNOG" id="COG0548">
    <property type="taxonomic scope" value="Bacteria"/>
</dbReference>
<dbReference type="HOGENOM" id="CLU_053680_0_0_5"/>
<dbReference type="UniPathway" id="UPA00068">
    <property type="reaction ID" value="UER00107"/>
</dbReference>
<dbReference type="Proteomes" id="UP000006575">
    <property type="component" value="Chromosome"/>
</dbReference>
<dbReference type="GO" id="GO:0005737">
    <property type="term" value="C:cytoplasm"/>
    <property type="evidence" value="ECO:0007669"/>
    <property type="project" value="UniProtKB-SubCell"/>
</dbReference>
<dbReference type="GO" id="GO:0003991">
    <property type="term" value="F:acetylglutamate kinase activity"/>
    <property type="evidence" value="ECO:0007669"/>
    <property type="project" value="UniProtKB-UniRule"/>
</dbReference>
<dbReference type="GO" id="GO:0005524">
    <property type="term" value="F:ATP binding"/>
    <property type="evidence" value="ECO:0007669"/>
    <property type="project" value="UniProtKB-UniRule"/>
</dbReference>
<dbReference type="GO" id="GO:0042450">
    <property type="term" value="P:arginine biosynthetic process via ornithine"/>
    <property type="evidence" value="ECO:0007669"/>
    <property type="project" value="UniProtKB-UniRule"/>
</dbReference>
<dbReference type="GO" id="GO:0006526">
    <property type="term" value="P:L-arginine biosynthetic process"/>
    <property type="evidence" value="ECO:0007669"/>
    <property type="project" value="UniProtKB-UniPathway"/>
</dbReference>
<dbReference type="CDD" id="cd04250">
    <property type="entry name" value="AAK_NAGK-C"/>
    <property type="match status" value="1"/>
</dbReference>
<dbReference type="FunFam" id="3.40.1160.10:FF:000004">
    <property type="entry name" value="Acetylglutamate kinase"/>
    <property type="match status" value="1"/>
</dbReference>
<dbReference type="Gene3D" id="3.40.1160.10">
    <property type="entry name" value="Acetylglutamate kinase-like"/>
    <property type="match status" value="1"/>
</dbReference>
<dbReference type="HAMAP" id="MF_00082">
    <property type="entry name" value="ArgB"/>
    <property type="match status" value="1"/>
</dbReference>
<dbReference type="InterPro" id="IPR036393">
    <property type="entry name" value="AceGlu_kinase-like_sf"/>
</dbReference>
<dbReference type="InterPro" id="IPR004662">
    <property type="entry name" value="AcgluKinase_fam"/>
</dbReference>
<dbReference type="InterPro" id="IPR037528">
    <property type="entry name" value="ArgB"/>
</dbReference>
<dbReference type="InterPro" id="IPR001048">
    <property type="entry name" value="Asp/Glu/Uridylate_kinase"/>
</dbReference>
<dbReference type="InterPro" id="IPR001057">
    <property type="entry name" value="Glu/AcGlu_kinase"/>
</dbReference>
<dbReference type="InterPro" id="IPR041727">
    <property type="entry name" value="NAGK-C"/>
</dbReference>
<dbReference type="NCBIfam" id="TIGR00761">
    <property type="entry name" value="argB"/>
    <property type="match status" value="1"/>
</dbReference>
<dbReference type="PANTHER" id="PTHR23342">
    <property type="entry name" value="N-ACETYLGLUTAMATE SYNTHASE"/>
    <property type="match status" value="1"/>
</dbReference>
<dbReference type="PANTHER" id="PTHR23342:SF0">
    <property type="entry name" value="N-ACETYLGLUTAMATE SYNTHASE, MITOCHONDRIAL"/>
    <property type="match status" value="1"/>
</dbReference>
<dbReference type="Pfam" id="PF00696">
    <property type="entry name" value="AA_kinase"/>
    <property type="match status" value="1"/>
</dbReference>
<dbReference type="PIRSF" id="PIRSF000728">
    <property type="entry name" value="NAGK"/>
    <property type="match status" value="1"/>
</dbReference>
<dbReference type="PRINTS" id="PR00474">
    <property type="entry name" value="GLU5KINASE"/>
</dbReference>
<dbReference type="SUPFAM" id="SSF53633">
    <property type="entry name" value="Carbamate kinase-like"/>
    <property type="match status" value="1"/>
</dbReference>
<evidence type="ECO:0000255" key="1">
    <source>
        <dbReference type="HAMAP-Rule" id="MF_00082"/>
    </source>
</evidence>
<proteinExistence type="inferred from homology"/>
<name>ARGB_RHIJ3</name>
<reference key="1">
    <citation type="journal article" date="2006" name="Genome Biol.">
        <title>The genome of Rhizobium leguminosarum has recognizable core and accessory components.</title>
        <authorList>
            <person name="Young J.P.W."/>
            <person name="Crossman L.C."/>
            <person name="Johnston A.W.B."/>
            <person name="Thomson N.R."/>
            <person name="Ghazoui Z.F."/>
            <person name="Hull K.H."/>
            <person name="Wexler M."/>
            <person name="Curson A.R.J."/>
            <person name="Todd J.D."/>
            <person name="Poole P.S."/>
            <person name="Mauchline T.H."/>
            <person name="East A.K."/>
            <person name="Quail M.A."/>
            <person name="Churcher C."/>
            <person name="Arrowsmith C."/>
            <person name="Cherevach I."/>
            <person name="Chillingworth T."/>
            <person name="Clarke K."/>
            <person name="Cronin A."/>
            <person name="Davis P."/>
            <person name="Fraser A."/>
            <person name="Hance Z."/>
            <person name="Hauser H."/>
            <person name="Jagels K."/>
            <person name="Moule S."/>
            <person name="Mungall K."/>
            <person name="Norbertczak H."/>
            <person name="Rabbinowitsch E."/>
            <person name="Sanders M."/>
            <person name="Simmonds M."/>
            <person name="Whitehead S."/>
            <person name="Parkhill J."/>
        </authorList>
    </citation>
    <scope>NUCLEOTIDE SEQUENCE [LARGE SCALE GENOMIC DNA]</scope>
    <source>
        <strain>DSM 114642 / LMG 32736 / 3841</strain>
    </source>
</reference>
<comment type="function">
    <text evidence="1">Catalyzes the ATP-dependent phosphorylation of N-acetyl-L-glutamate.</text>
</comment>
<comment type="catalytic activity">
    <reaction evidence="1">
        <text>N-acetyl-L-glutamate + ATP = N-acetyl-L-glutamyl 5-phosphate + ADP</text>
        <dbReference type="Rhea" id="RHEA:14629"/>
        <dbReference type="ChEBI" id="CHEBI:30616"/>
        <dbReference type="ChEBI" id="CHEBI:44337"/>
        <dbReference type="ChEBI" id="CHEBI:57936"/>
        <dbReference type="ChEBI" id="CHEBI:456216"/>
        <dbReference type="EC" id="2.7.2.8"/>
    </reaction>
</comment>
<comment type="pathway">
    <text evidence="1">Amino-acid biosynthesis; L-arginine biosynthesis; N(2)-acetyl-L-ornithine from L-glutamate: step 2/4.</text>
</comment>
<comment type="subcellular location">
    <subcellularLocation>
        <location evidence="1">Cytoplasm</location>
    </subcellularLocation>
</comment>
<comment type="similarity">
    <text evidence="1">Belongs to the acetylglutamate kinase family. ArgB subfamily.</text>
</comment>
<keyword id="KW-0028">Amino-acid biosynthesis</keyword>
<keyword id="KW-0055">Arginine biosynthesis</keyword>
<keyword id="KW-0067">ATP-binding</keyword>
<keyword id="KW-0963">Cytoplasm</keyword>
<keyword id="KW-0418">Kinase</keyword>
<keyword id="KW-0547">Nucleotide-binding</keyword>
<keyword id="KW-0808">Transferase</keyword>
<organism>
    <name type="scientific">Rhizobium johnstonii (strain DSM 114642 / LMG 32736 / 3841)</name>
    <name type="common">Rhizobium leguminosarum bv. viciae</name>
    <dbReference type="NCBI Taxonomy" id="216596"/>
    <lineage>
        <taxon>Bacteria</taxon>
        <taxon>Pseudomonadati</taxon>
        <taxon>Pseudomonadota</taxon>
        <taxon>Alphaproteobacteria</taxon>
        <taxon>Hyphomicrobiales</taxon>
        <taxon>Rhizobiaceae</taxon>
        <taxon>Rhizobium/Agrobacterium group</taxon>
        <taxon>Rhizobium</taxon>
        <taxon>Rhizobium johnstonii</taxon>
    </lineage>
</organism>
<gene>
    <name evidence="1" type="primary">argB</name>
    <name type="ordered locus">RL0445</name>
</gene>
<feature type="chain" id="PRO_0000264743" description="Acetylglutamate kinase">
    <location>
        <begin position="1"/>
        <end position="295"/>
    </location>
</feature>
<feature type="binding site" evidence="1">
    <location>
        <begin position="66"/>
        <end position="67"/>
    </location>
    <ligand>
        <name>substrate</name>
    </ligand>
</feature>
<feature type="binding site" evidence="1">
    <location>
        <position position="88"/>
    </location>
    <ligand>
        <name>substrate</name>
    </ligand>
</feature>
<feature type="binding site" evidence="1">
    <location>
        <position position="193"/>
    </location>
    <ligand>
        <name>substrate</name>
    </ligand>
</feature>
<feature type="site" description="Transition state stabilizer" evidence="1">
    <location>
        <position position="31"/>
    </location>
</feature>
<feature type="site" description="Transition state stabilizer" evidence="1">
    <location>
        <position position="253"/>
    </location>
</feature>